<proteinExistence type="inferred from homology"/>
<keyword id="KW-1185">Reference proteome</keyword>
<keyword id="KW-0687">Ribonucleoprotein</keyword>
<keyword id="KW-0689">Ribosomal protein</keyword>
<dbReference type="EMBL" id="BA000003">
    <property type="protein sequence ID" value="BAB12806.1"/>
    <property type="molecule type" value="Genomic_DNA"/>
</dbReference>
<dbReference type="RefSeq" id="NP_239920.1">
    <property type="nucleotide sequence ID" value="NC_002528.1"/>
</dbReference>
<dbReference type="RefSeq" id="WP_010895938.1">
    <property type="nucleotide sequence ID" value="NC_002528.1"/>
</dbReference>
<dbReference type="SMR" id="P57188"/>
<dbReference type="STRING" id="563178.BUAP5A_085"/>
<dbReference type="EnsemblBacteria" id="BAB12806">
    <property type="protein sequence ID" value="BAB12806"/>
    <property type="gene ID" value="BAB12806"/>
</dbReference>
<dbReference type="KEGG" id="buc:BU086"/>
<dbReference type="PATRIC" id="fig|107806.10.peg.92"/>
<dbReference type="eggNOG" id="COG0227">
    <property type="taxonomic scope" value="Bacteria"/>
</dbReference>
<dbReference type="HOGENOM" id="CLU_064548_3_1_6"/>
<dbReference type="Proteomes" id="UP000001806">
    <property type="component" value="Chromosome"/>
</dbReference>
<dbReference type="GO" id="GO:0022625">
    <property type="term" value="C:cytosolic large ribosomal subunit"/>
    <property type="evidence" value="ECO:0007669"/>
    <property type="project" value="TreeGrafter"/>
</dbReference>
<dbReference type="GO" id="GO:0003735">
    <property type="term" value="F:structural constituent of ribosome"/>
    <property type="evidence" value="ECO:0007669"/>
    <property type="project" value="InterPro"/>
</dbReference>
<dbReference type="GO" id="GO:0006412">
    <property type="term" value="P:translation"/>
    <property type="evidence" value="ECO:0007669"/>
    <property type="project" value="UniProtKB-UniRule"/>
</dbReference>
<dbReference type="FunFam" id="2.30.170.40:FF:000001">
    <property type="entry name" value="50S ribosomal protein L28"/>
    <property type="match status" value="1"/>
</dbReference>
<dbReference type="Gene3D" id="2.30.170.40">
    <property type="entry name" value="Ribosomal protein L28/L24"/>
    <property type="match status" value="1"/>
</dbReference>
<dbReference type="HAMAP" id="MF_00373">
    <property type="entry name" value="Ribosomal_bL28"/>
    <property type="match status" value="1"/>
</dbReference>
<dbReference type="InterPro" id="IPR026569">
    <property type="entry name" value="Ribosomal_bL28"/>
</dbReference>
<dbReference type="InterPro" id="IPR034704">
    <property type="entry name" value="Ribosomal_bL28/bL31-like_sf"/>
</dbReference>
<dbReference type="InterPro" id="IPR001383">
    <property type="entry name" value="Ribosomal_bL28_bact-type"/>
</dbReference>
<dbReference type="InterPro" id="IPR037147">
    <property type="entry name" value="Ribosomal_bL28_sf"/>
</dbReference>
<dbReference type="NCBIfam" id="TIGR00009">
    <property type="entry name" value="L28"/>
    <property type="match status" value="1"/>
</dbReference>
<dbReference type="PANTHER" id="PTHR13528">
    <property type="entry name" value="39S RIBOSOMAL PROTEIN L28, MITOCHONDRIAL"/>
    <property type="match status" value="1"/>
</dbReference>
<dbReference type="PANTHER" id="PTHR13528:SF2">
    <property type="entry name" value="LARGE RIBOSOMAL SUBUNIT PROTEIN BL28M"/>
    <property type="match status" value="1"/>
</dbReference>
<dbReference type="Pfam" id="PF00830">
    <property type="entry name" value="Ribosomal_L28"/>
    <property type="match status" value="1"/>
</dbReference>
<dbReference type="SUPFAM" id="SSF143800">
    <property type="entry name" value="L28p-like"/>
    <property type="match status" value="1"/>
</dbReference>
<name>RL28_BUCAI</name>
<accession>P57188</accession>
<gene>
    <name evidence="1" type="primary">rpmB</name>
    <name type="ordered locus">BU086</name>
</gene>
<evidence type="ECO:0000255" key="1">
    <source>
        <dbReference type="HAMAP-Rule" id="MF_00373"/>
    </source>
</evidence>
<evidence type="ECO:0000305" key="2"/>
<feature type="chain" id="PRO_0000178444" description="Large ribosomal subunit protein bL28">
    <location>
        <begin position="1"/>
        <end position="75"/>
    </location>
</feature>
<sequence length="75" mass="8990">MSRICQITGKKRMIGNNRSHALNATKRKFLINIQYHRFWIADEKRFIKLHVSTNGMRYIDKKGIETVIRKINMKK</sequence>
<comment type="similarity">
    <text evidence="1">Belongs to the bacterial ribosomal protein bL28 family.</text>
</comment>
<reference key="1">
    <citation type="journal article" date="2000" name="Nature">
        <title>Genome sequence of the endocellular bacterial symbiont of aphids Buchnera sp. APS.</title>
        <authorList>
            <person name="Shigenobu S."/>
            <person name="Watanabe H."/>
            <person name="Hattori M."/>
            <person name="Sakaki Y."/>
            <person name="Ishikawa H."/>
        </authorList>
    </citation>
    <scope>NUCLEOTIDE SEQUENCE [LARGE SCALE GENOMIC DNA]</scope>
    <source>
        <strain>APS</strain>
    </source>
</reference>
<organism>
    <name type="scientific">Buchnera aphidicola subsp. Acyrthosiphon pisum (strain APS)</name>
    <name type="common">Acyrthosiphon pisum symbiotic bacterium</name>
    <dbReference type="NCBI Taxonomy" id="107806"/>
    <lineage>
        <taxon>Bacteria</taxon>
        <taxon>Pseudomonadati</taxon>
        <taxon>Pseudomonadota</taxon>
        <taxon>Gammaproteobacteria</taxon>
        <taxon>Enterobacterales</taxon>
        <taxon>Erwiniaceae</taxon>
        <taxon>Buchnera</taxon>
    </lineage>
</organism>
<protein>
    <recommendedName>
        <fullName evidence="1">Large ribosomal subunit protein bL28</fullName>
    </recommendedName>
    <alternativeName>
        <fullName evidence="2">50S ribosomal protein L28</fullName>
    </alternativeName>
</protein>